<gene>
    <name evidence="7" type="primary">CIT2</name>
    <name type="ordered locus">YCR005C</name>
    <name type="ORF">YCR043</name>
    <name type="ORF">YCR5C</name>
</gene>
<accession>P08679</accession>
<accession>D6VR15</accession>
<protein>
    <recommendedName>
        <fullName evidence="7">Citrate synthase, peroxisomal</fullName>
        <ecNumber evidence="6">2.3.3.16</ecNumber>
    </recommendedName>
</protein>
<feature type="chain" id="PRO_0000169984" description="Citrate synthase, peroxisomal">
    <location>
        <begin position="1"/>
        <end position="460"/>
    </location>
</feature>
<feature type="short sequence motif" description="C-terminal peroxisome targeting signal (PTS1)" evidence="4">
    <location>
        <begin position="458"/>
        <end position="460"/>
    </location>
</feature>
<feature type="active site" evidence="1">
    <location>
        <position position="293"/>
    </location>
</feature>
<feature type="active site" evidence="1">
    <location>
        <position position="339"/>
    </location>
</feature>
<feature type="active site" evidence="1">
    <location>
        <position position="394"/>
    </location>
</feature>
<feature type="modified residue" description="Phosphoserine" evidence="10">
    <location>
        <position position="21"/>
    </location>
</feature>
<feature type="cross-link" description="Glycyl lysine isopeptide (Lys-Gly) (interchain with G-Cter in ubiquitin)" evidence="11">
    <location>
        <position position="218"/>
    </location>
</feature>
<feature type="cross-link" description="Glycyl lysine isopeptide (Lys-Gly) (interchain with G-Cter in ubiquitin)" evidence="11">
    <location>
        <position position="239"/>
    </location>
</feature>
<feature type="cross-link" description="Glycyl lysine isopeptide (Lys-Gly) (interchain with G-Cter in ubiquitin)" evidence="2">
    <location>
        <position position="354"/>
    </location>
</feature>
<feature type="cross-link" description="Glycyl lysine isopeptide (Lys-Gly) (interchain with G-Cter in ubiquitin)" evidence="2">
    <location>
        <position position="385"/>
    </location>
</feature>
<feature type="mutagenesis site" description="Prevents the stabilization of the enzyme by oxaloacetate and impairs the catalytic activity." evidence="5">
    <original>H</original>
    <variation>G</variation>
    <location>
        <position position="293"/>
    </location>
</feature>
<feature type="mutagenesis site" description="Leads to a decrease of the catalytic activity and the ubiquitination efficiency." evidence="5">
    <original>G</original>
    <variation>A</variation>
    <variation>V</variation>
    <location>
        <position position="294"/>
    </location>
</feature>
<feature type="mutagenesis site" description="Prevents the stabilization of the enzyme by oxaloacetate and impairs the catalytic activity." evidence="5">
    <original>H</original>
    <variation>Q</variation>
    <variation>N</variation>
    <location>
        <position position="339"/>
    </location>
</feature>
<feature type="helix" evidence="12">
    <location>
        <begin position="26"/>
        <end position="48"/>
    </location>
</feature>
<feature type="strand" evidence="12">
    <location>
        <begin position="51"/>
        <end position="57"/>
    </location>
</feature>
<feature type="helix" evidence="12">
    <location>
        <begin position="58"/>
        <end position="61"/>
    </location>
</feature>
<feature type="turn" evidence="12">
    <location>
        <begin position="62"/>
        <end position="67"/>
    </location>
</feature>
<feature type="strand" evidence="12">
    <location>
        <begin position="69"/>
        <end position="72"/>
    </location>
</feature>
<feature type="strand" evidence="12">
    <location>
        <begin position="74"/>
        <end position="79"/>
    </location>
</feature>
<feature type="turn" evidence="12">
    <location>
        <begin position="80"/>
        <end position="82"/>
    </location>
</feature>
<feature type="strand" evidence="12">
    <location>
        <begin position="83"/>
        <end position="86"/>
    </location>
</feature>
<feature type="helix" evidence="12">
    <location>
        <begin position="91"/>
        <end position="97"/>
    </location>
</feature>
<feature type="helix" evidence="12">
    <location>
        <begin position="109"/>
        <end position="118"/>
    </location>
</feature>
<feature type="helix" evidence="12">
    <location>
        <begin position="124"/>
        <end position="136"/>
    </location>
</feature>
<feature type="helix" evidence="12">
    <location>
        <begin position="142"/>
        <end position="150"/>
    </location>
</feature>
<feature type="helix" evidence="12">
    <location>
        <begin position="157"/>
        <end position="167"/>
    </location>
</feature>
<feature type="helix" evidence="12">
    <location>
        <begin position="168"/>
        <end position="171"/>
    </location>
</feature>
<feature type="helix" evidence="12">
    <location>
        <begin position="173"/>
        <end position="180"/>
    </location>
</feature>
<feature type="helix" evidence="12">
    <location>
        <begin position="184"/>
        <end position="186"/>
    </location>
</feature>
<feature type="helix" evidence="12">
    <location>
        <begin position="187"/>
        <end position="214"/>
    </location>
</feature>
<feature type="helix" evidence="12">
    <location>
        <begin position="228"/>
        <end position="236"/>
    </location>
</feature>
<feature type="helix" evidence="12">
    <location>
        <begin position="241"/>
        <end position="253"/>
    </location>
</feature>
<feature type="helix" evidence="12">
    <location>
        <begin position="262"/>
        <end position="272"/>
    </location>
</feature>
<feature type="helix" evidence="12">
    <location>
        <begin position="277"/>
        <end position="288"/>
    </location>
</feature>
<feature type="turn" evidence="12">
    <location>
        <begin position="291"/>
        <end position="295"/>
    </location>
</feature>
<feature type="helix" evidence="12">
    <location>
        <begin position="296"/>
        <end position="309"/>
    </location>
</feature>
<feature type="turn" evidence="12">
    <location>
        <begin position="311"/>
        <end position="313"/>
    </location>
</feature>
<feature type="helix" evidence="12">
    <location>
        <begin position="317"/>
        <end position="329"/>
    </location>
</feature>
<feature type="strand" evidence="13">
    <location>
        <begin position="337"/>
        <end position="341"/>
    </location>
</feature>
<feature type="helix" evidence="12">
    <location>
        <begin position="347"/>
        <end position="359"/>
    </location>
</feature>
<feature type="helix" evidence="12">
    <location>
        <begin position="364"/>
        <end position="373"/>
    </location>
</feature>
<feature type="helix" evidence="12">
    <location>
        <begin position="376"/>
        <end position="383"/>
    </location>
</feature>
<feature type="strand" evidence="13">
    <location>
        <begin position="387"/>
        <end position="391"/>
    </location>
</feature>
<feature type="helix" evidence="12">
    <location>
        <begin position="394"/>
        <end position="403"/>
    </location>
</feature>
<feature type="helix" evidence="12">
    <location>
        <begin position="409"/>
        <end position="411"/>
    </location>
</feature>
<feature type="helix" evidence="12">
    <location>
        <begin position="412"/>
        <end position="434"/>
    </location>
</feature>
<feature type="strand" evidence="12">
    <location>
        <begin position="442"/>
        <end position="444"/>
    </location>
</feature>
<feature type="helix" evidence="12">
    <location>
        <begin position="446"/>
        <end position="458"/>
    </location>
</feature>
<reference key="1">
    <citation type="journal article" date="1986" name="Mol. Cell. Biol.">
        <title>Mitochondrial and nonmitochondrial citrate synthases in Saccharomyces cerevisiae are encoded by distinct homologous genes.</title>
        <authorList>
            <person name="Rosenkrantz M."/>
            <person name="Alam T."/>
            <person name="Kim K.-S."/>
            <person name="Clark B.J."/>
            <person name="Srere P.A."/>
            <person name="Guarente L.P."/>
        </authorList>
    </citation>
    <scope>NUCLEOTIDE SEQUENCE [GENOMIC DNA]</scope>
</reference>
<reference key="2">
    <citation type="journal article" date="1992" name="Yeast">
        <title>The complete sequence of a 10.8kb fragment to the right of the chromosome III centromere of Saccharomyces cerevisiae.</title>
        <authorList>
            <person name="Biteau N."/>
            <person name="Fremaux C."/>
            <person name="Hebrard S."/>
            <person name="Menara A."/>
            <person name="Aigle M."/>
            <person name="Crouzet M."/>
        </authorList>
    </citation>
    <scope>NUCLEOTIDE SEQUENCE [GENOMIC DNA]</scope>
</reference>
<reference key="3">
    <citation type="journal article" date="1992" name="Nature">
        <title>The complete DNA sequence of yeast chromosome III.</title>
        <authorList>
            <person name="Oliver S.G."/>
            <person name="van der Aart Q.J.M."/>
            <person name="Agostoni-Carbone M.L."/>
            <person name="Aigle M."/>
            <person name="Alberghina L."/>
            <person name="Alexandraki D."/>
            <person name="Antoine G."/>
            <person name="Anwar R."/>
            <person name="Ballesta J.P.G."/>
            <person name="Benit P."/>
            <person name="Berben G."/>
            <person name="Bergantino E."/>
            <person name="Biteau N."/>
            <person name="Bolle P.-A."/>
            <person name="Bolotin-Fukuhara M."/>
            <person name="Brown A."/>
            <person name="Brown A.J.P."/>
            <person name="Buhler J.-M."/>
            <person name="Carcano C."/>
            <person name="Carignani G."/>
            <person name="Cederberg H."/>
            <person name="Chanet R."/>
            <person name="Contreras R."/>
            <person name="Crouzet M."/>
            <person name="Daignan-Fornier B."/>
            <person name="Defoor E."/>
            <person name="Delgado M.D."/>
            <person name="Demolder J."/>
            <person name="Doira C."/>
            <person name="Dubois E."/>
            <person name="Dujon B."/>
            <person name="Duesterhoeft A."/>
            <person name="Erdmann D."/>
            <person name="Esteban M."/>
            <person name="Fabre F."/>
            <person name="Fairhead C."/>
            <person name="Faye G."/>
            <person name="Feldmann H."/>
            <person name="Fiers W."/>
            <person name="Francingues-Gaillard M.-C."/>
            <person name="Franco L."/>
            <person name="Frontali L."/>
            <person name="Fukuhara H."/>
            <person name="Fuller L.J."/>
            <person name="Galland P."/>
            <person name="Gent M.E."/>
            <person name="Gigot D."/>
            <person name="Gilliquet V."/>
            <person name="Glansdorff N."/>
            <person name="Goffeau A."/>
            <person name="Grenson M."/>
            <person name="Grisanti P."/>
            <person name="Grivell L.A."/>
            <person name="de Haan M."/>
            <person name="Haasemann M."/>
            <person name="Hatat D."/>
            <person name="Hoenicka J."/>
            <person name="Hegemann J.H."/>
            <person name="Herbert C.J."/>
            <person name="Hilger F."/>
            <person name="Hohmann S."/>
            <person name="Hollenberg C.P."/>
            <person name="Huse K."/>
            <person name="Iborra F."/>
            <person name="Indge K.J."/>
            <person name="Isono K."/>
            <person name="Jacq C."/>
            <person name="Jacquet M."/>
            <person name="James C.M."/>
            <person name="Jauniaux J.-C."/>
            <person name="Jia Y."/>
            <person name="Jimenez A."/>
            <person name="Kelly A."/>
            <person name="Kleinhans U."/>
            <person name="Kreisl P."/>
            <person name="Lanfranchi G."/>
            <person name="Lewis C."/>
            <person name="van der Linden C.G."/>
            <person name="Lucchini G."/>
            <person name="Lutzenkirchen K."/>
            <person name="Maat M.J."/>
            <person name="Mallet L."/>
            <person name="Mannhaupt G."/>
            <person name="Martegani E."/>
            <person name="Mathieu A."/>
            <person name="Maurer C.T.C."/>
            <person name="McConnell D."/>
            <person name="McKee R.A."/>
            <person name="Messenguy F."/>
            <person name="Mewes H.-W."/>
            <person name="Molemans F."/>
            <person name="Montague M.A."/>
            <person name="Muzi Falconi M."/>
            <person name="Navas L."/>
            <person name="Newlon C.S."/>
            <person name="Noone D."/>
            <person name="Pallier C."/>
            <person name="Panzeri L."/>
            <person name="Pearson B.M."/>
            <person name="Perea J."/>
            <person name="Philippsen P."/>
            <person name="Pierard A."/>
            <person name="Planta R.J."/>
            <person name="Plevani P."/>
            <person name="Poetsch B."/>
            <person name="Pohl F.M."/>
            <person name="Purnelle B."/>
            <person name="Ramezani Rad M."/>
            <person name="Rasmussen S.W."/>
            <person name="Raynal A."/>
            <person name="Remacha M.A."/>
            <person name="Richterich P."/>
            <person name="Roberts A.B."/>
            <person name="Rodriguez F."/>
            <person name="Sanz E."/>
            <person name="Schaaff-Gerstenschlaeger I."/>
            <person name="Scherens B."/>
            <person name="Schweitzer B."/>
            <person name="Shu Y."/>
            <person name="Skala J."/>
            <person name="Slonimski P.P."/>
            <person name="Sor F."/>
            <person name="Soustelle C."/>
            <person name="Spiegelberg R."/>
            <person name="Stateva L.I."/>
            <person name="Steensma H.Y."/>
            <person name="Steiner S."/>
            <person name="Thierry A."/>
            <person name="Thireos G."/>
            <person name="Tzermia M."/>
            <person name="Urrestarazu L.A."/>
            <person name="Valle G."/>
            <person name="Vetter I."/>
            <person name="van Vliet-Reedijk J.C."/>
            <person name="Voet M."/>
            <person name="Volckaert G."/>
            <person name="Vreken P."/>
            <person name="Wang H."/>
            <person name="Warmington J.R."/>
            <person name="von Wettstein D."/>
            <person name="Wicksteed B.L."/>
            <person name="Wilson C."/>
            <person name="Wurst H."/>
            <person name="Xu G."/>
            <person name="Yoshikawa A."/>
            <person name="Zimmermann F.K."/>
            <person name="Sgouros J.G."/>
        </authorList>
    </citation>
    <scope>NUCLEOTIDE SEQUENCE [LARGE SCALE GENOMIC DNA]</scope>
    <source>
        <strain>ATCC 204508 / S288c</strain>
    </source>
</reference>
<reference key="4">
    <citation type="journal article" date="2014" name="G3 (Bethesda)">
        <title>The reference genome sequence of Saccharomyces cerevisiae: Then and now.</title>
        <authorList>
            <person name="Engel S.R."/>
            <person name="Dietrich F.S."/>
            <person name="Fisk D.G."/>
            <person name="Binkley G."/>
            <person name="Balakrishnan R."/>
            <person name="Costanzo M.C."/>
            <person name="Dwight S.S."/>
            <person name="Hitz B.C."/>
            <person name="Karra K."/>
            <person name="Nash R.S."/>
            <person name="Weng S."/>
            <person name="Wong E.D."/>
            <person name="Lloyd P."/>
            <person name="Skrzypek M.S."/>
            <person name="Miyasato S.R."/>
            <person name="Simison M."/>
            <person name="Cherry J.M."/>
        </authorList>
    </citation>
    <scope>GENOME REANNOTATION</scope>
    <source>
        <strain>ATCC 204508 / S288c</strain>
    </source>
</reference>
<reference key="5">
    <citation type="journal article" date="2007" name="Genome Res.">
        <title>Approaching a complete repository of sequence-verified protein-encoding clones for Saccharomyces cerevisiae.</title>
        <authorList>
            <person name="Hu Y."/>
            <person name="Rolfs A."/>
            <person name="Bhullar B."/>
            <person name="Murthy T.V.S."/>
            <person name="Zhu C."/>
            <person name="Berger M.F."/>
            <person name="Camargo A.A."/>
            <person name="Kelley F."/>
            <person name="McCarron S."/>
            <person name="Jepson D."/>
            <person name="Richardson A."/>
            <person name="Raphael J."/>
            <person name="Moreira D."/>
            <person name="Taycher E."/>
            <person name="Zuo D."/>
            <person name="Mohr S."/>
            <person name="Kane M.F."/>
            <person name="Williamson J."/>
            <person name="Simpson A.J.G."/>
            <person name="Bulyk M.L."/>
            <person name="Harlow E."/>
            <person name="Marsischky G."/>
            <person name="Kolodner R.D."/>
            <person name="LaBaer J."/>
        </authorList>
    </citation>
    <scope>NUCLEOTIDE SEQUENCE [GENOMIC DNA]</scope>
    <source>
        <strain>ATCC 204508 / S288c</strain>
    </source>
</reference>
<reference key="6">
    <citation type="journal article" date="1991" name="Mol. Cell. Biol.">
        <title>Intramitochondrial functions regulate nonmitochondrial citrate synthase (CIT2) expression in Saccharomyces cerevisiae.</title>
        <authorList>
            <person name="Liao X."/>
            <person name="Small W.C."/>
            <person name="Srere P.A."/>
            <person name="Butow R.A."/>
        </authorList>
    </citation>
    <scope>NUCLEOTIDE SEQUENCE [GENOMIC DNA] OF 1-24</scope>
</reference>
<reference key="7">
    <citation type="journal article" date="1986" name="Mol. Cell. Biol.">
        <title>Saccharomyces cerevisiae contains two functional citrate synthase genes.</title>
        <authorList>
            <person name="Kim K.S."/>
            <person name="Rosenkrantz M.S."/>
            <person name="Guarente L."/>
        </authorList>
    </citation>
    <scope>FUNCTION</scope>
    <scope>CATALYTIC ACTIVITY</scope>
    <scope>INDUCTION</scope>
    <scope>DISRUPTION PHENOTYPE</scope>
</reference>
<reference key="8">
    <citation type="journal article" date="1990" name="Mol. Cell. Biol.">
        <title>Citrate synthase encoded by the CIT2 gene of Saccharomyces cerevisiae is peroxisomal.</title>
        <authorList>
            <person name="Lewin A.S."/>
            <person name="Hines V."/>
            <person name="Small G.M."/>
        </authorList>
    </citation>
    <scope>DOMAIN</scope>
    <scope>SUBCELLULAR LOCATION</scope>
</reference>
<reference key="9">
    <citation type="journal article" date="2003" name="Nature">
        <title>Global analysis of protein expression in yeast.</title>
        <authorList>
            <person name="Ghaemmaghami S."/>
            <person name="Huh W.-K."/>
            <person name="Bower K."/>
            <person name="Howson R.W."/>
            <person name="Belle A."/>
            <person name="Dephoure N."/>
            <person name="O'Shea E.K."/>
            <person name="Weissman J.S."/>
        </authorList>
    </citation>
    <scope>LEVEL OF PROTEIN EXPRESSION [LARGE SCALE ANALYSIS]</scope>
</reference>
<reference key="10">
    <citation type="journal article" date="2003" name="Nat. Biotechnol.">
        <title>A proteomics approach to understanding protein ubiquitination.</title>
        <authorList>
            <person name="Peng J."/>
            <person name="Schwartz D."/>
            <person name="Elias J.E."/>
            <person name="Thoreen C.C."/>
            <person name="Cheng D."/>
            <person name="Marsischky G."/>
            <person name="Roelofs J."/>
            <person name="Finley D."/>
            <person name="Gygi S.P."/>
        </authorList>
    </citation>
    <scope>UBIQUITINATION [LARGE SCALE ANALYSIS] AT LYS-354 AND LYS-385</scope>
    <scope>IDENTIFICATION BY MASS SPECTROMETRY</scope>
    <source>
        <strain>SUB592</strain>
    </source>
</reference>
<reference key="11">
    <citation type="journal article" date="2009" name="Science">
        <title>Global analysis of Cdk1 substrate phosphorylation sites provides insights into evolution.</title>
        <authorList>
            <person name="Holt L.J."/>
            <person name="Tuch B.B."/>
            <person name="Villen J."/>
            <person name="Johnson A.D."/>
            <person name="Gygi S.P."/>
            <person name="Morgan D.O."/>
        </authorList>
    </citation>
    <scope>PHOSPHORYLATION [LARGE SCALE ANALYSIS] AT SER-21</scope>
    <scope>IDENTIFICATION BY MASS SPECTROMETRY [LARGE SCALE ANALYSIS]</scope>
</reference>
<reference key="12">
    <citation type="journal article" date="2012" name="Proc. Natl. Acad. Sci. U.S.A.">
        <title>N-terminal acetylome analyses and functional insights of the N-terminal acetyltransferase NatB.</title>
        <authorList>
            <person name="Van Damme P."/>
            <person name="Lasa M."/>
            <person name="Polevoda B."/>
            <person name="Gazquez C."/>
            <person name="Elosegui-Artola A."/>
            <person name="Kim D.S."/>
            <person name="De Juan-Pardo E."/>
            <person name="Demeyer K."/>
            <person name="Hole K."/>
            <person name="Larrea E."/>
            <person name="Timmerman E."/>
            <person name="Prieto J."/>
            <person name="Arnesen T."/>
            <person name="Sherman F."/>
            <person name="Gevaert K."/>
            <person name="Aldabe R."/>
        </authorList>
    </citation>
    <scope>IDENTIFICATION BY MASS SPECTROMETRY [LARGE SCALE ANALYSIS]</scope>
</reference>
<reference key="13">
    <citation type="journal article" date="2012" name="Proteomics">
        <title>Sites of ubiquitin attachment in Saccharomyces cerevisiae.</title>
        <authorList>
            <person name="Starita L.M."/>
            <person name="Lo R.S."/>
            <person name="Eng J.K."/>
            <person name="von Haller P.D."/>
            <person name="Fields S."/>
        </authorList>
    </citation>
    <scope>UBIQUITINATION [LARGE SCALE ANALYSIS] AT LYS-218 AND LYS-239</scope>
    <scope>IDENTIFICATION BY MASS SPECTROMETRY [LARGE SCALE ANALYSIS]</scope>
</reference>
<reference key="14">
    <citation type="journal article" date="2015" name="Mol. Cell">
        <title>The ubiquitin ligase SCF(Ucc1) acts as a metabolic switch for the glyoxylate cycle.</title>
        <authorList>
            <person name="Nakatsukasa K."/>
            <person name="Nishimura T."/>
            <person name="Byrne S.D."/>
            <person name="Okamoto M."/>
            <person name="Takahashi-Nakaguchi A."/>
            <person name="Chibana H."/>
            <person name="Okumura F."/>
            <person name="Kamura T."/>
        </authorList>
    </citation>
    <scope>FUNCTION</scope>
    <scope>INTERACTION WITH UCC1</scope>
    <scope>SUBCELLULAR LOCATION</scope>
    <scope>INDUCTION</scope>
    <scope>UBIQUITINATION</scope>
    <scope>MUTAGENESIS OF HIS-293; GLY-294 AND HIS-339</scope>
</reference>
<sequence>MTVPYLNSNRNVASYLQSNSSQEKTLKERFSEIYPIHAQDVRQFVKEHGKTKISDVLLEQVYGGMRGIPGSVWEGSVLDPEDGIRFRGRTIADIQKDLPKAKGSSQPLPEALFWLLLTGEVPTQAQVENLSADLMSRSELPSHVVQLLDNLPKDLHPMAQFSIAVTALESESKFAKAYAQGISKQDYWSYTFEDSLDLLGKLPVIAAKIYRNVFKDGKMGEVDPNADYAKNLVNLIGSKDEDFVDLMRLYLTIHSDHEGGNVSAHTSHLVGSALSSPYLSLASGLNGLAGPLHGRANQEVLEWLFALKEEVNDDYSKDTIEKYLWDTLNSGRVIPGYGHAVLRKTDPRYMAQRKFAMDHFPDYELFKLVSSIYEVAPGVLTEHGKTKNPWPNVDAHSGVLLQYYGLKESSFYTVLFGVSRAFGILAQLITDRAIGASIERPKSYSTEKYKELVKNIESKL</sequence>
<comment type="function">
    <text evidence="5 6 9">Peroxisomal citrate synthase involved in the citrate homeostasis (PubMed:25982115, PubMed:3023912). Catalyzes the condensation of acetyl coenzyme A and oxaloacetate to form citrate (PubMed:25982115, PubMed:3023912). Citrate synthase is the rate-limiting enzyme of the tricarboxylic acid (TCA) cycle (Probable).</text>
</comment>
<comment type="catalytic activity">
    <reaction evidence="1 6">
        <text>oxaloacetate + acetyl-CoA + H2O = citrate + CoA + H(+)</text>
        <dbReference type="Rhea" id="RHEA:16845"/>
        <dbReference type="ChEBI" id="CHEBI:15377"/>
        <dbReference type="ChEBI" id="CHEBI:15378"/>
        <dbReference type="ChEBI" id="CHEBI:16452"/>
        <dbReference type="ChEBI" id="CHEBI:16947"/>
        <dbReference type="ChEBI" id="CHEBI:57287"/>
        <dbReference type="ChEBI" id="CHEBI:57288"/>
        <dbReference type="EC" id="2.3.3.16"/>
    </reaction>
</comment>
<comment type="pathway">
    <text evidence="6">Carbohydrate metabolism; tricarboxylic acid cycle; isocitrate from oxaloacetate: step 1/2.</text>
</comment>
<comment type="subunit">
    <text evidence="5">Interacts with F-box protein UCC1.</text>
</comment>
<comment type="interaction">
    <interactant intactId="EBI-4713">
        <id>P08679</id>
    </interactant>
    <interactant intactId="EBI-4713">
        <id>P08679</id>
        <label>CIT2</label>
    </interactant>
    <organismsDiffer>false</organismsDiffer>
    <experiments>3</experiments>
</comment>
<comment type="subcellular location">
    <subcellularLocation>
        <location evidence="5">Cytoplasm</location>
    </subcellularLocation>
    <subcellularLocation>
        <location evidence="4 5">Peroxisome</location>
    </subcellularLocation>
</comment>
<comment type="induction">
    <text evidence="5 6">Expression is repressed in medium containing both glucose and glutamate (PubMed:3023912). Expression is up-regulated by the presence of C2-compounds such as acetate (PubMed:25982115).</text>
</comment>
<comment type="PTM">
    <text evidence="5">Ubiquitinated by the E3 ubiquitin-protein ligase complex SCF(UCC1), which leads to its degradation by the proteasome (PubMed:25982115). Ubiquitination is prevented by oxaloacetate, suggesting the existence of an oxaloacetate-dependent positive feedback loop that stabilizes CIT2 (PubMed:25982115).</text>
</comment>
<comment type="disruption phenotype">
    <text evidence="6">Leads to glutamate auxotrophy and poor growth on rich medium containing lactate, a nonfermentable carbon source, when CIT1 is also deleted.</text>
</comment>
<comment type="miscellaneous">
    <text evidence="8">Citrate synthase is found in nearly all cells capable of oxidative metabolism.</text>
</comment>
<comment type="miscellaneous">
    <text evidence="3">Present with 2310 molecules/cell in log phase SD medium.</text>
</comment>
<comment type="similarity">
    <text evidence="8">Belongs to the citrate synthase family.</text>
</comment>
<name>CISY2_YEAST</name>
<organism>
    <name type="scientific">Saccharomyces cerevisiae (strain ATCC 204508 / S288c)</name>
    <name type="common">Baker's yeast</name>
    <dbReference type="NCBI Taxonomy" id="559292"/>
    <lineage>
        <taxon>Eukaryota</taxon>
        <taxon>Fungi</taxon>
        <taxon>Dikarya</taxon>
        <taxon>Ascomycota</taxon>
        <taxon>Saccharomycotina</taxon>
        <taxon>Saccharomycetes</taxon>
        <taxon>Saccharomycetales</taxon>
        <taxon>Saccharomycetaceae</taxon>
        <taxon>Saccharomyces</taxon>
    </lineage>
</organism>
<dbReference type="EC" id="2.3.3.16" evidence="6"/>
<dbReference type="EMBL" id="Z11113">
    <property type="protein sequence ID" value="CAA77442.1"/>
    <property type="molecule type" value="Genomic_DNA"/>
</dbReference>
<dbReference type="EMBL" id="M14686">
    <property type="protein sequence ID" value="AAA34497.1"/>
    <property type="molecule type" value="Genomic_DNA"/>
</dbReference>
<dbReference type="EMBL" id="X59720">
    <property type="protein sequence ID" value="CAA42342.1"/>
    <property type="molecule type" value="Genomic_DNA"/>
</dbReference>
<dbReference type="EMBL" id="AY692837">
    <property type="protein sequence ID" value="AAT92856.1"/>
    <property type="molecule type" value="Genomic_DNA"/>
</dbReference>
<dbReference type="EMBL" id="M54982">
    <property type="protein sequence ID" value="AAA34498.1"/>
    <property type="molecule type" value="Genomic_DNA"/>
</dbReference>
<dbReference type="EMBL" id="BK006937">
    <property type="protein sequence ID" value="DAA07484.1"/>
    <property type="molecule type" value="Genomic_DNA"/>
</dbReference>
<dbReference type="PIR" id="A25393">
    <property type="entry name" value="YKBYC"/>
</dbReference>
<dbReference type="RefSeq" id="NP_009931.1">
    <property type="nucleotide sequence ID" value="NM_001178718.1"/>
</dbReference>
<dbReference type="PDB" id="8GR8">
    <property type="method" value="X-ray"/>
    <property type="resolution" value="2.39 A"/>
    <property type="chains" value="A/B=1-460"/>
</dbReference>
<dbReference type="PDB" id="8GR9">
    <property type="method" value="X-ray"/>
    <property type="resolution" value="1.48 A"/>
    <property type="chains" value="A/B=1-460"/>
</dbReference>
<dbReference type="PDB" id="8GRE">
    <property type="method" value="X-ray"/>
    <property type="resolution" value="2.30 A"/>
    <property type="chains" value="A/B=1-460"/>
</dbReference>
<dbReference type="PDB" id="8GRF">
    <property type="method" value="X-ray"/>
    <property type="resolution" value="2.53 A"/>
    <property type="chains" value="A/B=1-460"/>
</dbReference>
<dbReference type="PDBsum" id="8GR8"/>
<dbReference type="PDBsum" id="8GR9"/>
<dbReference type="PDBsum" id="8GRE"/>
<dbReference type="PDBsum" id="8GRF"/>
<dbReference type="SMR" id="P08679"/>
<dbReference type="BioGRID" id="30983">
    <property type="interactions" value="124"/>
</dbReference>
<dbReference type="DIP" id="DIP-1259N"/>
<dbReference type="FunCoup" id="P08679">
    <property type="interactions" value="1004"/>
</dbReference>
<dbReference type="IntAct" id="P08679">
    <property type="interactions" value="8"/>
</dbReference>
<dbReference type="MINT" id="P08679"/>
<dbReference type="STRING" id="4932.YCR005C"/>
<dbReference type="BindingDB" id="P08679"/>
<dbReference type="ChEMBL" id="CHEMBL1741170"/>
<dbReference type="iPTMnet" id="P08679"/>
<dbReference type="PaxDb" id="4932-YCR005C"/>
<dbReference type="PeptideAtlas" id="P08679"/>
<dbReference type="EnsemblFungi" id="YCR005C_mRNA">
    <property type="protein sequence ID" value="YCR005C"/>
    <property type="gene ID" value="YCR005C"/>
</dbReference>
<dbReference type="GeneID" id="850361"/>
<dbReference type="KEGG" id="sce:YCR005C"/>
<dbReference type="AGR" id="SGD:S000000598"/>
<dbReference type="SGD" id="S000000598">
    <property type="gene designation" value="CIT2"/>
</dbReference>
<dbReference type="VEuPathDB" id="FungiDB:YCR005C"/>
<dbReference type="eggNOG" id="KOG2617">
    <property type="taxonomic scope" value="Eukaryota"/>
</dbReference>
<dbReference type="GeneTree" id="ENSGT00390000006813"/>
<dbReference type="HOGENOM" id="CLU_022049_2_1_1"/>
<dbReference type="InParanoid" id="P08679"/>
<dbReference type="OMA" id="GSKEVCK"/>
<dbReference type="OrthoDB" id="8017587at2759"/>
<dbReference type="BioCyc" id="YEAST:YCR005C-MONOMER"/>
<dbReference type="UniPathway" id="UPA00223">
    <property type="reaction ID" value="UER00717"/>
</dbReference>
<dbReference type="BioGRID-ORCS" id="850361">
    <property type="hits" value="1 hit in 10 CRISPR screens"/>
</dbReference>
<dbReference type="PRO" id="PR:P08679"/>
<dbReference type="Proteomes" id="UP000002311">
    <property type="component" value="Chromosome III"/>
</dbReference>
<dbReference type="RNAct" id="P08679">
    <property type="molecule type" value="protein"/>
</dbReference>
<dbReference type="GO" id="GO:0005737">
    <property type="term" value="C:cytoplasm"/>
    <property type="evidence" value="ECO:0000314"/>
    <property type="project" value="SGD"/>
</dbReference>
<dbReference type="GO" id="GO:0005759">
    <property type="term" value="C:mitochondrial matrix"/>
    <property type="evidence" value="ECO:0000318"/>
    <property type="project" value="GO_Central"/>
</dbReference>
<dbReference type="GO" id="GO:0005739">
    <property type="term" value="C:mitochondrion"/>
    <property type="evidence" value="ECO:0007005"/>
    <property type="project" value="SGD"/>
</dbReference>
<dbReference type="GO" id="GO:0005777">
    <property type="term" value="C:peroxisome"/>
    <property type="evidence" value="ECO:0000314"/>
    <property type="project" value="SGD"/>
</dbReference>
<dbReference type="GO" id="GO:0004108">
    <property type="term" value="F:citrate (Si)-synthase activity"/>
    <property type="evidence" value="ECO:0000314"/>
    <property type="project" value="SGD"/>
</dbReference>
<dbReference type="GO" id="GO:0042802">
    <property type="term" value="F:identical protein binding"/>
    <property type="evidence" value="ECO:0000353"/>
    <property type="project" value="IntAct"/>
</dbReference>
<dbReference type="GO" id="GO:0005975">
    <property type="term" value="P:carbohydrate metabolic process"/>
    <property type="evidence" value="ECO:0000318"/>
    <property type="project" value="GO_Central"/>
</dbReference>
<dbReference type="GO" id="GO:0006101">
    <property type="term" value="P:citrate metabolic process"/>
    <property type="evidence" value="ECO:0000316"/>
    <property type="project" value="SGD"/>
</dbReference>
<dbReference type="GO" id="GO:0006099">
    <property type="term" value="P:tricarboxylic acid cycle"/>
    <property type="evidence" value="ECO:0000318"/>
    <property type="project" value="GO_Central"/>
</dbReference>
<dbReference type="FunFam" id="1.10.230.10:FF:000001">
    <property type="entry name" value="Citrate synthase"/>
    <property type="match status" value="1"/>
</dbReference>
<dbReference type="FunFam" id="1.10.580.10:FF:000001">
    <property type="entry name" value="Citrate synthase"/>
    <property type="match status" value="1"/>
</dbReference>
<dbReference type="Gene3D" id="1.10.580.10">
    <property type="entry name" value="Citrate Synthase, domain 1"/>
    <property type="match status" value="1"/>
</dbReference>
<dbReference type="Gene3D" id="1.10.230.10">
    <property type="entry name" value="Cytochrome P450-Terp, domain 2"/>
    <property type="match status" value="1"/>
</dbReference>
<dbReference type="InterPro" id="IPR016142">
    <property type="entry name" value="Citrate_synth-like_lrg_a-sub"/>
</dbReference>
<dbReference type="InterPro" id="IPR016143">
    <property type="entry name" value="Citrate_synth-like_sm_a-sub"/>
</dbReference>
<dbReference type="InterPro" id="IPR002020">
    <property type="entry name" value="Citrate_synthase"/>
</dbReference>
<dbReference type="InterPro" id="IPR019810">
    <property type="entry name" value="Citrate_synthase_AS"/>
</dbReference>
<dbReference type="InterPro" id="IPR010109">
    <property type="entry name" value="Citrate_synthase_euk"/>
</dbReference>
<dbReference type="InterPro" id="IPR036969">
    <property type="entry name" value="Citrate_synthase_sf"/>
</dbReference>
<dbReference type="NCBIfam" id="TIGR01793">
    <property type="entry name" value="cit_synth_euk"/>
    <property type="match status" value="1"/>
</dbReference>
<dbReference type="NCBIfam" id="NF007128">
    <property type="entry name" value="PRK09569.1"/>
    <property type="match status" value="1"/>
</dbReference>
<dbReference type="PANTHER" id="PTHR11739">
    <property type="entry name" value="CITRATE SYNTHASE"/>
    <property type="match status" value="1"/>
</dbReference>
<dbReference type="PANTHER" id="PTHR11739:SF8">
    <property type="entry name" value="CITRATE SYNTHASE, MITOCHONDRIAL"/>
    <property type="match status" value="1"/>
</dbReference>
<dbReference type="Pfam" id="PF00285">
    <property type="entry name" value="Citrate_synt"/>
    <property type="match status" value="1"/>
</dbReference>
<dbReference type="PRINTS" id="PR00143">
    <property type="entry name" value="CITRTSNTHASE"/>
</dbReference>
<dbReference type="SUPFAM" id="SSF48256">
    <property type="entry name" value="Citrate synthase"/>
    <property type="match status" value="1"/>
</dbReference>
<dbReference type="PROSITE" id="PS00480">
    <property type="entry name" value="CITRATE_SYNTHASE"/>
    <property type="match status" value="1"/>
</dbReference>
<proteinExistence type="evidence at protein level"/>
<keyword id="KW-0002">3D-structure</keyword>
<keyword id="KW-0963">Cytoplasm</keyword>
<keyword id="KW-1017">Isopeptide bond</keyword>
<keyword id="KW-0576">Peroxisome</keyword>
<keyword id="KW-0597">Phosphoprotein</keyword>
<keyword id="KW-1185">Reference proteome</keyword>
<keyword id="KW-0808">Transferase</keyword>
<keyword id="KW-0816">Tricarboxylic acid cycle</keyword>
<keyword id="KW-0832">Ubl conjugation</keyword>
<evidence type="ECO:0000255" key="1">
    <source>
        <dbReference type="PROSITE-ProRule" id="PRU10117"/>
    </source>
</evidence>
<evidence type="ECO:0000269" key="2">
    <source>
    </source>
</evidence>
<evidence type="ECO:0000269" key="3">
    <source>
    </source>
</evidence>
<evidence type="ECO:0000269" key="4">
    <source>
    </source>
</evidence>
<evidence type="ECO:0000269" key="5">
    <source>
    </source>
</evidence>
<evidence type="ECO:0000269" key="6">
    <source>
    </source>
</evidence>
<evidence type="ECO:0000303" key="7">
    <source>
    </source>
</evidence>
<evidence type="ECO:0000305" key="8"/>
<evidence type="ECO:0000305" key="9">
    <source>
    </source>
</evidence>
<evidence type="ECO:0007744" key="10">
    <source>
    </source>
</evidence>
<evidence type="ECO:0007744" key="11">
    <source>
    </source>
</evidence>
<evidence type="ECO:0007829" key="12">
    <source>
        <dbReference type="PDB" id="8GR9"/>
    </source>
</evidence>
<evidence type="ECO:0007829" key="13">
    <source>
        <dbReference type="PDB" id="8GRE"/>
    </source>
</evidence>